<evidence type="ECO:0000255" key="1">
    <source>
        <dbReference type="HAMAP-Rule" id="MF_01663"/>
    </source>
</evidence>
<comment type="function">
    <text evidence="1">Involved in the anomeric conversion of L-rhamnose.</text>
</comment>
<comment type="catalytic activity">
    <reaction evidence="1">
        <text>alpha-L-rhamnose = beta-L-rhamnose</text>
        <dbReference type="Rhea" id="RHEA:25584"/>
        <dbReference type="ChEBI" id="CHEBI:27586"/>
        <dbReference type="ChEBI" id="CHEBI:27907"/>
        <dbReference type="EC" id="5.1.3.32"/>
    </reaction>
</comment>
<comment type="pathway">
    <text evidence="1">Carbohydrate metabolism; L-rhamnose metabolism.</text>
</comment>
<comment type="subunit">
    <text evidence="1">Homodimer.</text>
</comment>
<comment type="subcellular location">
    <subcellularLocation>
        <location evidence="1">Cytoplasm</location>
    </subcellularLocation>
</comment>
<comment type="similarity">
    <text evidence="1">Belongs to the rhamnose mutarotase family.</text>
</comment>
<proteinExistence type="inferred from homology"/>
<sequence length="104" mass="12190">MIRKAFVMQVNPDAHEEYQRRHNPIWPELEAVLKSHGAHNYAIYLDKAHNLLFATVEIESEERWNAVASTDVCQRWWKYMTDVMPANADNSPVSSELQEVFYLP</sequence>
<accession>Q8FBE2</accession>
<protein>
    <recommendedName>
        <fullName evidence="1">L-rhamnose mutarotase</fullName>
        <ecNumber evidence="1">5.1.3.32</ecNumber>
    </recommendedName>
    <alternativeName>
        <fullName evidence="1">Rhamnose 1-epimerase</fullName>
    </alternativeName>
    <alternativeName>
        <fullName evidence="1">Type-3 mutarotase</fullName>
    </alternativeName>
</protein>
<dbReference type="EC" id="5.1.3.32" evidence="1"/>
<dbReference type="EMBL" id="AE014075">
    <property type="protein sequence ID" value="AAN83278.1"/>
    <property type="molecule type" value="Genomic_DNA"/>
</dbReference>
<dbReference type="RefSeq" id="WP_000619492.1">
    <property type="nucleotide sequence ID" value="NZ_CP051263.1"/>
</dbReference>
<dbReference type="SMR" id="Q8FBE2"/>
<dbReference type="STRING" id="199310.c4850"/>
<dbReference type="KEGG" id="ecc:c4850"/>
<dbReference type="eggNOG" id="COG3254">
    <property type="taxonomic scope" value="Bacteria"/>
</dbReference>
<dbReference type="HOGENOM" id="CLU_100689_2_0_6"/>
<dbReference type="BioCyc" id="ECOL199310:C4850-MONOMER"/>
<dbReference type="UniPathway" id="UPA00125"/>
<dbReference type="Proteomes" id="UP000001410">
    <property type="component" value="Chromosome"/>
</dbReference>
<dbReference type="GO" id="GO:0005737">
    <property type="term" value="C:cytoplasm"/>
    <property type="evidence" value="ECO:0007669"/>
    <property type="project" value="UniProtKB-SubCell"/>
</dbReference>
<dbReference type="GO" id="GO:0062192">
    <property type="term" value="F:L-rhamnose mutarotase activity"/>
    <property type="evidence" value="ECO:0007669"/>
    <property type="project" value="UniProtKB-EC"/>
</dbReference>
<dbReference type="GO" id="GO:0019301">
    <property type="term" value="P:rhamnose catabolic process"/>
    <property type="evidence" value="ECO:0007669"/>
    <property type="project" value="TreeGrafter"/>
</dbReference>
<dbReference type="FunFam" id="3.30.70.100:FF:000013">
    <property type="entry name" value="L-rhamnose mutarotase"/>
    <property type="match status" value="1"/>
</dbReference>
<dbReference type="Gene3D" id="3.30.70.100">
    <property type="match status" value="1"/>
</dbReference>
<dbReference type="HAMAP" id="MF_01663">
    <property type="entry name" value="L_rham_rotase"/>
    <property type="match status" value="1"/>
</dbReference>
<dbReference type="InterPro" id="IPR011008">
    <property type="entry name" value="Dimeric_a/b-barrel"/>
</dbReference>
<dbReference type="InterPro" id="IPR013448">
    <property type="entry name" value="L-rhamnose_mutarotase"/>
</dbReference>
<dbReference type="InterPro" id="IPR008000">
    <property type="entry name" value="Rham/fucose_mutarotase"/>
</dbReference>
<dbReference type="NCBIfam" id="TIGR02625">
    <property type="entry name" value="YiiL_rotase"/>
    <property type="match status" value="1"/>
</dbReference>
<dbReference type="PANTHER" id="PTHR34389">
    <property type="entry name" value="L-RHAMNOSE MUTAROTASE"/>
    <property type="match status" value="1"/>
</dbReference>
<dbReference type="PANTHER" id="PTHR34389:SF2">
    <property type="entry name" value="L-RHAMNOSE MUTAROTASE"/>
    <property type="match status" value="1"/>
</dbReference>
<dbReference type="Pfam" id="PF05336">
    <property type="entry name" value="rhaM"/>
    <property type="match status" value="1"/>
</dbReference>
<dbReference type="SUPFAM" id="SSF54909">
    <property type="entry name" value="Dimeric alpha+beta barrel"/>
    <property type="match status" value="1"/>
</dbReference>
<reference key="1">
    <citation type="journal article" date="2002" name="Proc. Natl. Acad. Sci. U.S.A.">
        <title>Extensive mosaic structure revealed by the complete genome sequence of uropathogenic Escherichia coli.</title>
        <authorList>
            <person name="Welch R.A."/>
            <person name="Burland V."/>
            <person name="Plunkett G. III"/>
            <person name="Redford P."/>
            <person name="Roesch P."/>
            <person name="Rasko D."/>
            <person name="Buckles E.L."/>
            <person name="Liou S.-R."/>
            <person name="Boutin A."/>
            <person name="Hackett J."/>
            <person name="Stroud D."/>
            <person name="Mayhew G.F."/>
            <person name="Rose D.J."/>
            <person name="Zhou S."/>
            <person name="Schwartz D.C."/>
            <person name="Perna N.T."/>
            <person name="Mobley H.L.T."/>
            <person name="Donnenberg M.S."/>
            <person name="Blattner F.R."/>
        </authorList>
    </citation>
    <scope>NUCLEOTIDE SEQUENCE [LARGE SCALE GENOMIC DNA]</scope>
    <source>
        <strain>CFT073 / ATCC 700928 / UPEC</strain>
    </source>
</reference>
<gene>
    <name evidence="1" type="primary">rhaM</name>
    <name type="ordered locus">c4850</name>
</gene>
<feature type="chain" id="PRO_0000344576" description="L-rhamnose mutarotase">
    <location>
        <begin position="1"/>
        <end position="104"/>
    </location>
</feature>
<feature type="active site" description="Proton donor" evidence="1">
    <location>
        <position position="22"/>
    </location>
</feature>
<feature type="binding site" evidence="1">
    <location>
        <position position="18"/>
    </location>
    <ligand>
        <name>substrate</name>
    </ligand>
</feature>
<feature type="binding site" evidence="1">
    <location>
        <position position="41"/>
    </location>
    <ligand>
        <name>substrate</name>
    </ligand>
</feature>
<feature type="binding site" evidence="1">
    <location>
        <begin position="76"/>
        <end position="77"/>
    </location>
    <ligand>
        <name>substrate</name>
    </ligand>
</feature>
<organism>
    <name type="scientific">Escherichia coli O6:H1 (strain CFT073 / ATCC 700928 / UPEC)</name>
    <dbReference type="NCBI Taxonomy" id="199310"/>
    <lineage>
        <taxon>Bacteria</taxon>
        <taxon>Pseudomonadati</taxon>
        <taxon>Pseudomonadota</taxon>
        <taxon>Gammaproteobacteria</taxon>
        <taxon>Enterobacterales</taxon>
        <taxon>Enterobacteriaceae</taxon>
        <taxon>Escherichia</taxon>
    </lineage>
</organism>
<keyword id="KW-0119">Carbohydrate metabolism</keyword>
<keyword id="KW-0963">Cytoplasm</keyword>
<keyword id="KW-0413">Isomerase</keyword>
<keyword id="KW-1185">Reference proteome</keyword>
<keyword id="KW-0684">Rhamnose metabolism</keyword>
<name>RHAM_ECOL6</name>